<sequence length="363" mass="39957">MKIGVFVPIGNNGWLISTHAPQYMPTFELNKAIVQKAEHYHFDFALSMIKLRGFGGKTEFWDHNLESFTLMAGLAAVTSRIQIYATAATLTLPPAIVARMAATIDSISGGRFGVNLVTGWQKPEYEQMGIWPGDDYFSRRYDYLTEYVQVLRDLWGSGKSDFKGDFFTMDDCRVSPQPSVPMKVICAGQSDAGMAFSARYADFNFCFGKGVNTPTAFAPTAARMKQAAEQTGRDVGSYVLFMVIADETDDAARAKWEHYKAGADEEALSWLTEQSQKDTRSGTDTNVRQMADPTSAVNINMGTLVGSYASVARMLDEVATVPGAEGVLLTFDDFLSGIENFGERIQPLMQCRAHLPALTQEVA</sequence>
<keyword id="KW-0285">Flavoprotein</keyword>
<keyword id="KW-0288">FMN</keyword>
<keyword id="KW-0503">Monooxygenase</keyword>
<keyword id="KW-0521">NADP</keyword>
<keyword id="KW-0560">Oxidoreductase</keyword>
<comment type="function">
    <text evidence="1">Catalyzes the pyrimidine ring opening between N-3 and C-4 by an unusual flavin hydroperoxide-catalyzed mechanism, adding oxygen atoms in the process to yield ureidoacrylate peracid, that immediately reacts with FMN forming ureidoacrylate and FMN-N(5)-oxide. The FMN-N(5)-oxide reacts spontaneously with NADH to produce FMN. Requires the flavin reductase RutF to regenerate FMN in vivo.</text>
</comment>
<comment type="catalytic activity">
    <reaction evidence="1">
        <text>uracil + FMNH2 + NADH + O2 = (Z)-3-ureidoacrylate + FMN + NAD(+) + H2O + H(+)</text>
        <dbReference type="Rhea" id="RHEA:31587"/>
        <dbReference type="ChEBI" id="CHEBI:15377"/>
        <dbReference type="ChEBI" id="CHEBI:15378"/>
        <dbReference type="ChEBI" id="CHEBI:15379"/>
        <dbReference type="ChEBI" id="CHEBI:17568"/>
        <dbReference type="ChEBI" id="CHEBI:57540"/>
        <dbReference type="ChEBI" id="CHEBI:57618"/>
        <dbReference type="ChEBI" id="CHEBI:57945"/>
        <dbReference type="ChEBI" id="CHEBI:58210"/>
        <dbReference type="ChEBI" id="CHEBI:59891"/>
        <dbReference type="EC" id="1.14.99.46"/>
    </reaction>
</comment>
<comment type="catalytic activity">
    <reaction evidence="1">
        <text>thymine + FMNH2 + NADH + O2 = (Z)-2-methylureidoacrylate + FMN + NAD(+) + H2O + H(+)</text>
        <dbReference type="Rhea" id="RHEA:31599"/>
        <dbReference type="ChEBI" id="CHEBI:15377"/>
        <dbReference type="ChEBI" id="CHEBI:15378"/>
        <dbReference type="ChEBI" id="CHEBI:15379"/>
        <dbReference type="ChEBI" id="CHEBI:17821"/>
        <dbReference type="ChEBI" id="CHEBI:57540"/>
        <dbReference type="ChEBI" id="CHEBI:57618"/>
        <dbReference type="ChEBI" id="CHEBI:57945"/>
        <dbReference type="ChEBI" id="CHEBI:58210"/>
        <dbReference type="ChEBI" id="CHEBI:143783"/>
        <dbReference type="EC" id="1.14.99.46"/>
    </reaction>
</comment>
<comment type="induction">
    <text evidence="1">Up-regulated by the nitrogen regulatory protein C (NtrC also called GlnG) and repressed by RutR.</text>
</comment>
<comment type="similarity">
    <text evidence="1">Belongs to the NtaA/SnaA/DszA monooxygenase family. RutA subfamily.</text>
</comment>
<gene>
    <name evidence="1" type="primary">rutA</name>
    <name type="ordered locus">EcSMS35_2113</name>
</gene>
<protein>
    <recommendedName>
        <fullName evidence="1">Pyrimidine monooxygenase RutA</fullName>
        <ecNumber evidence="1">1.14.99.46</ecNumber>
    </recommendedName>
</protein>
<feature type="chain" id="PRO_0000402602" description="Pyrimidine monooxygenase RutA">
    <location>
        <begin position="1"/>
        <end position="363"/>
    </location>
</feature>
<feature type="binding site" evidence="1">
    <location>
        <begin position="49"/>
        <end position="50"/>
    </location>
    <ligand>
        <name>FMN</name>
        <dbReference type="ChEBI" id="CHEBI:58210"/>
    </ligand>
</feature>
<feature type="binding site" evidence="1">
    <location>
        <position position="115"/>
    </location>
    <ligand>
        <name>FMN</name>
        <dbReference type="ChEBI" id="CHEBI:58210"/>
    </ligand>
</feature>
<feature type="binding site" evidence="1">
    <location>
        <position position="124"/>
    </location>
    <ligand>
        <name>FMN</name>
        <dbReference type="ChEBI" id="CHEBI:58210"/>
    </ligand>
</feature>
<feature type="binding site" evidence="1">
    <location>
        <begin position="140"/>
        <end position="141"/>
    </location>
    <ligand>
        <name>FMN</name>
        <dbReference type="ChEBI" id="CHEBI:58210"/>
    </ligand>
</feature>
<feature type="binding site" evidence="1">
    <location>
        <position position="190"/>
    </location>
    <ligand>
        <name>FMN</name>
        <dbReference type="ChEBI" id="CHEBI:58210"/>
    </ligand>
</feature>
<proteinExistence type="inferred from homology"/>
<reference key="1">
    <citation type="journal article" date="2008" name="J. Bacteriol.">
        <title>Insights into the environmental resistance gene pool from the genome sequence of the multidrug-resistant environmental isolate Escherichia coli SMS-3-5.</title>
        <authorList>
            <person name="Fricke W.F."/>
            <person name="Wright M.S."/>
            <person name="Lindell A.H."/>
            <person name="Harkins D.M."/>
            <person name="Baker-Austin C."/>
            <person name="Ravel J."/>
            <person name="Stepanauskas R."/>
        </authorList>
    </citation>
    <scope>NUCLEOTIDE SEQUENCE [LARGE SCALE GENOMIC DNA]</scope>
    <source>
        <strain>SMS-3-5 / SECEC</strain>
    </source>
</reference>
<dbReference type="EC" id="1.14.99.46" evidence="1"/>
<dbReference type="EMBL" id="CP000970">
    <property type="protein sequence ID" value="ACB15974.1"/>
    <property type="molecule type" value="Genomic_DNA"/>
</dbReference>
<dbReference type="SMR" id="B1LIZ3"/>
<dbReference type="KEGG" id="ecm:EcSMS35_2113"/>
<dbReference type="HOGENOM" id="CLU_027853_1_1_6"/>
<dbReference type="Proteomes" id="UP000007011">
    <property type="component" value="Chromosome"/>
</dbReference>
<dbReference type="GO" id="GO:0008726">
    <property type="term" value="F:alkanesulfonate monooxygenase activity"/>
    <property type="evidence" value="ECO:0007669"/>
    <property type="project" value="TreeGrafter"/>
</dbReference>
<dbReference type="GO" id="GO:0052614">
    <property type="term" value="F:uracil oxygenase activity"/>
    <property type="evidence" value="ECO:0007669"/>
    <property type="project" value="UniProtKB-EC"/>
</dbReference>
<dbReference type="GO" id="GO:0046306">
    <property type="term" value="P:alkanesulfonate catabolic process"/>
    <property type="evidence" value="ECO:0007669"/>
    <property type="project" value="TreeGrafter"/>
</dbReference>
<dbReference type="GO" id="GO:0019740">
    <property type="term" value="P:nitrogen utilization"/>
    <property type="evidence" value="ECO:0007669"/>
    <property type="project" value="UniProtKB-UniRule"/>
</dbReference>
<dbReference type="GO" id="GO:0006212">
    <property type="term" value="P:uracil catabolic process"/>
    <property type="evidence" value="ECO:0007669"/>
    <property type="project" value="UniProtKB-UniRule"/>
</dbReference>
<dbReference type="CDD" id="cd01094">
    <property type="entry name" value="Alkanesulfonate_monoxygenase"/>
    <property type="match status" value="1"/>
</dbReference>
<dbReference type="FunFam" id="3.20.20.30:FF:000003">
    <property type="entry name" value="Pyrimidine monooxygenase RutA"/>
    <property type="match status" value="1"/>
</dbReference>
<dbReference type="Gene3D" id="3.20.20.30">
    <property type="entry name" value="Luciferase-like domain"/>
    <property type="match status" value="1"/>
</dbReference>
<dbReference type="HAMAP" id="MF_01699">
    <property type="entry name" value="RutA"/>
    <property type="match status" value="1"/>
</dbReference>
<dbReference type="InterPro" id="IPR011251">
    <property type="entry name" value="Luciferase-like_dom"/>
</dbReference>
<dbReference type="InterPro" id="IPR036661">
    <property type="entry name" value="Luciferase-like_sf"/>
</dbReference>
<dbReference type="InterPro" id="IPR019914">
    <property type="entry name" value="Pyrimidine_monooxygenase_RutA"/>
</dbReference>
<dbReference type="InterPro" id="IPR050172">
    <property type="entry name" value="SsuD_RutA_monooxygenase"/>
</dbReference>
<dbReference type="NCBIfam" id="TIGR03612">
    <property type="entry name" value="RutA"/>
    <property type="match status" value="1"/>
</dbReference>
<dbReference type="PANTHER" id="PTHR42847">
    <property type="entry name" value="ALKANESULFONATE MONOOXYGENASE"/>
    <property type="match status" value="1"/>
</dbReference>
<dbReference type="PANTHER" id="PTHR42847:SF4">
    <property type="entry name" value="ALKANESULFONATE MONOOXYGENASE-RELATED"/>
    <property type="match status" value="1"/>
</dbReference>
<dbReference type="Pfam" id="PF00296">
    <property type="entry name" value="Bac_luciferase"/>
    <property type="match status" value="1"/>
</dbReference>
<dbReference type="SUPFAM" id="SSF51679">
    <property type="entry name" value="Bacterial luciferase-like"/>
    <property type="match status" value="1"/>
</dbReference>
<evidence type="ECO:0000255" key="1">
    <source>
        <dbReference type="HAMAP-Rule" id="MF_01699"/>
    </source>
</evidence>
<organism>
    <name type="scientific">Escherichia coli (strain SMS-3-5 / SECEC)</name>
    <dbReference type="NCBI Taxonomy" id="439855"/>
    <lineage>
        <taxon>Bacteria</taxon>
        <taxon>Pseudomonadati</taxon>
        <taxon>Pseudomonadota</taxon>
        <taxon>Gammaproteobacteria</taxon>
        <taxon>Enterobacterales</taxon>
        <taxon>Enterobacteriaceae</taxon>
        <taxon>Escherichia</taxon>
    </lineage>
</organism>
<name>RUTA_ECOSM</name>
<accession>B1LIZ3</accession>